<accession>Q78T81</accession>
<accession>Q8K2K5</accession>
<evidence type="ECO:0000250" key="1">
    <source>
        <dbReference type="UniProtKB" id="Q5T9C2"/>
    </source>
</evidence>
<evidence type="ECO:0000255" key="2">
    <source>
        <dbReference type="PROSITE-ProRule" id="PRU01186"/>
    </source>
</evidence>
<evidence type="ECO:0000256" key="3">
    <source>
        <dbReference type="SAM" id="MobiDB-lite"/>
    </source>
</evidence>
<evidence type="ECO:0000269" key="4">
    <source>
    </source>
</evidence>
<evidence type="ECO:0000269" key="5">
    <source>
    </source>
</evidence>
<evidence type="ECO:0000305" key="6"/>
<name>EEIG1_MOUSE</name>
<organism>
    <name type="scientific">Mus musculus</name>
    <name type="common">Mouse</name>
    <dbReference type="NCBI Taxonomy" id="10090"/>
    <lineage>
        <taxon>Eukaryota</taxon>
        <taxon>Metazoa</taxon>
        <taxon>Chordata</taxon>
        <taxon>Craniata</taxon>
        <taxon>Vertebrata</taxon>
        <taxon>Euteleostomi</taxon>
        <taxon>Mammalia</taxon>
        <taxon>Eutheria</taxon>
        <taxon>Euarchontoglires</taxon>
        <taxon>Glires</taxon>
        <taxon>Rodentia</taxon>
        <taxon>Myomorpha</taxon>
        <taxon>Muroidea</taxon>
        <taxon>Muridae</taxon>
        <taxon>Murinae</taxon>
        <taxon>Mus</taxon>
        <taxon>Mus</taxon>
    </lineage>
</organism>
<feature type="chain" id="PRO_0000261635" description="Early estrogen-induced gene 1 protein">
    <location>
        <begin position="1"/>
        <end position="392"/>
    </location>
</feature>
<feature type="domain" description="C2 NT-type" evidence="2">
    <location>
        <begin position="2"/>
        <end position="145"/>
    </location>
</feature>
<feature type="region of interest" description="Required for interaction with TNFRSF11A/RANK" evidence="4">
    <location>
        <begin position="129"/>
        <end position="138"/>
    </location>
</feature>
<feature type="region of interest" description="Disordered" evidence="3">
    <location>
        <begin position="173"/>
        <end position="324"/>
    </location>
</feature>
<feature type="compositionally biased region" description="Low complexity" evidence="3">
    <location>
        <begin position="183"/>
        <end position="194"/>
    </location>
</feature>
<feature type="compositionally biased region" description="Polar residues" evidence="3">
    <location>
        <begin position="228"/>
        <end position="255"/>
    </location>
</feature>
<feature type="compositionally biased region" description="Low complexity" evidence="3">
    <location>
        <begin position="262"/>
        <end position="273"/>
    </location>
</feature>
<feature type="compositionally biased region" description="Basic and acidic residues" evidence="3">
    <location>
        <begin position="281"/>
        <end position="300"/>
    </location>
</feature>
<feature type="compositionally biased region" description="Basic and acidic residues" evidence="3">
    <location>
        <begin position="307"/>
        <end position="324"/>
    </location>
</feature>
<keyword id="KW-0963">Cytoplasm</keyword>
<keyword id="KW-0472">Membrane</keyword>
<keyword id="KW-0539">Nucleus</keyword>
<keyword id="KW-1185">Reference proteome</keyword>
<gene>
    <name type="primary">Eeig1</name>
    <name type="synonym">Fam102a</name>
</gene>
<dbReference type="EMBL" id="AK049032">
    <property type="protein sequence ID" value="BAC33519.1"/>
    <property type="molecule type" value="mRNA"/>
</dbReference>
<dbReference type="EMBL" id="AK157331">
    <property type="protein sequence ID" value="BAE34050.1"/>
    <property type="molecule type" value="mRNA"/>
</dbReference>
<dbReference type="EMBL" id="AK157490">
    <property type="protein sequence ID" value="BAE34101.1"/>
    <property type="molecule type" value="mRNA"/>
</dbReference>
<dbReference type="EMBL" id="AK170536">
    <property type="protein sequence ID" value="BAE41864.1"/>
    <property type="molecule type" value="mRNA"/>
</dbReference>
<dbReference type="EMBL" id="AK170847">
    <property type="protein sequence ID" value="BAE42070.1"/>
    <property type="molecule type" value="mRNA"/>
</dbReference>
<dbReference type="EMBL" id="AK170951">
    <property type="protein sequence ID" value="BAE42135.1"/>
    <property type="molecule type" value="mRNA"/>
</dbReference>
<dbReference type="EMBL" id="AK172536">
    <property type="protein sequence ID" value="BAE43056.1"/>
    <property type="molecule type" value="mRNA"/>
</dbReference>
<dbReference type="EMBL" id="BC031157">
    <property type="protein sequence ID" value="AAH31157.1"/>
    <property type="status" value="ALT_INIT"/>
    <property type="molecule type" value="mRNA"/>
</dbReference>
<dbReference type="CCDS" id="CCDS15917.1"/>
<dbReference type="RefSeq" id="NP_705788.1">
    <property type="nucleotide sequence ID" value="NM_153560.5"/>
</dbReference>
<dbReference type="SMR" id="Q78T81"/>
<dbReference type="FunCoup" id="Q78T81">
    <property type="interactions" value="1195"/>
</dbReference>
<dbReference type="STRING" id="10090.ENSMUSP00000044731"/>
<dbReference type="GlyGen" id="Q78T81">
    <property type="glycosylation" value="2 sites, 1 N-linked glycan (1 site), 1 O-linked glycan (1 site)"/>
</dbReference>
<dbReference type="iPTMnet" id="Q78T81"/>
<dbReference type="PhosphoSitePlus" id="Q78T81"/>
<dbReference type="PaxDb" id="10090-ENSMUSP00000044731"/>
<dbReference type="ProteomicsDB" id="275794"/>
<dbReference type="Antibodypedia" id="51717">
    <property type="antibodies" value="12 antibodies from 9 providers"/>
</dbReference>
<dbReference type="DNASU" id="98952"/>
<dbReference type="Ensembl" id="ENSMUST00000048375.6">
    <property type="protein sequence ID" value="ENSMUSP00000044731.6"/>
    <property type="gene ID" value="ENSMUSG00000039157.13"/>
</dbReference>
<dbReference type="GeneID" id="98952"/>
<dbReference type="KEGG" id="mmu:98952"/>
<dbReference type="UCSC" id="uc008jfs.1">
    <property type="organism name" value="mouse"/>
</dbReference>
<dbReference type="AGR" id="MGI:2138935"/>
<dbReference type="CTD" id="399665"/>
<dbReference type="MGI" id="MGI:2138935">
    <property type="gene designation" value="Eeig1"/>
</dbReference>
<dbReference type="VEuPathDB" id="HostDB:ENSMUSG00000039157"/>
<dbReference type="eggNOG" id="ENOG502QRRN">
    <property type="taxonomic scope" value="Eukaryota"/>
</dbReference>
<dbReference type="GeneTree" id="ENSGT00940000156811"/>
<dbReference type="HOGENOM" id="CLU_024948_1_1_1"/>
<dbReference type="InParanoid" id="Q78T81"/>
<dbReference type="OMA" id="RPPVKQN"/>
<dbReference type="OrthoDB" id="3365224at2759"/>
<dbReference type="PhylomeDB" id="Q78T81"/>
<dbReference type="TreeFam" id="TF320966"/>
<dbReference type="BioGRID-ORCS" id="98952">
    <property type="hits" value="1 hit in 78 CRISPR screens"/>
</dbReference>
<dbReference type="ChiTaRS" id="Fam102a">
    <property type="organism name" value="mouse"/>
</dbReference>
<dbReference type="PRO" id="PR:Q78T81"/>
<dbReference type="Proteomes" id="UP000000589">
    <property type="component" value="Chromosome 2"/>
</dbReference>
<dbReference type="RNAct" id="Q78T81">
    <property type="molecule type" value="protein"/>
</dbReference>
<dbReference type="Bgee" id="ENSMUSG00000039157">
    <property type="expression patterns" value="Expressed in dentate gyrus of hippocampal formation granule cell and 264 other cell types or tissues"/>
</dbReference>
<dbReference type="ExpressionAtlas" id="Q78T81">
    <property type="expression patterns" value="baseline and differential"/>
</dbReference>
<dbReference type="GO" id="GO:0005737">
    <property type="term" value="C:cytoplasm"/>
    <property type="evidence" value="ECO:0000314"/>
    <property type="project" value="UniProtKB"/>
</dbReference>
<dbReference type="GO" id="GO:0045121">
    <property type="term" value="C:membrane raft"/>
    <property type="evidence" value="ECO:0000314"/>
    <property type="project" value="UniProtKB"/>
</dbReference>
<dbReference type="GO" id="GO:0005634">
    <property type="term" value="C:nucleus"/>
    <property type="evidence" value="ECO:0000314"/>
    <property type="project" value="UniProtKB"/>
</dbReference>
<dbReference type="GO" id="GO:0045672">
    <property type="term" value="P:positive regulation of osteoclast differentiation"/>
    <property type="evidence" value="ECO:0000315"/>
    <property type="project" value="UniProtKB"/>
</dbReference>
<dbReference type="InterPro" id="IPR039931">
    <property type="entry name" value="EEIG1/2-like"/>
</dbReference>
<dbReference type="InterPro" id="IPR019448">
    <property type="entry name" value="NT-C2"/>
</dbReference>
<dbReference type="PANTHER" id="PTHR21456:SF2">
    <property type="entry name" value="EARLY ESTROGEN-INDUCED GENE 1 PROTEIN"/>
    <property type="match status" value="1"/>
</dbReference>
<dbReference type="PANTHER" id="PTHR21456">
    <property type="entry name" value="FAMILY WITH SEQUENCE SIMILARITY 102"/>
    <property type="match status" value="1"/>
</dbReference>
<dbReference type="Pfam" id="PF10358">
    <property type="entry name" value="NT-C2"/>
    <property type="match status" value="1"/>
</dbReference>
<dbReference type="PROSITE" id="PS51840">
    <property type="entry name" value="C2_NT"/>
    <property type="match status" value="1"/>
</dbReference>
<protein>
    <recommendedName>
        <fullName>Early estrogen-induced gene 1 protein</fullName>
        <shortName>EEIG1</shortName>
    </recommendedName>
</protein>
<reference key="1">
    <citation type="journal article" date="2005" name="Science">
        <title>The transcriptional landscape of the mammalian genome.</title>
        <authorList>
            <person name="Carninci P."/>
            <person name="Kasukawa T."/>
            <person name="Katayama S."/>
            <person name="Gough J."/>
            <person name="Frith M.C."/>
            <person name="Maeda N."/>
            <person name="Oyama R."/>
            <person name="Ravasi T."/>
            <person name="Lenhard B."/>
            <person name="Wells C."/>
            <person name="Kodzius R."/>
            <person name="Shimokawa K."/>
            <person name="Bajic V.B."/>
            <person name="Brenner S.E."/>
            <person name="Batalov S."/>
            <person name="Forrest A.R."/>
            <person name="Zavolan M."/>
            <person name="Davis M.J."/>
            <person name="Wilming L.G."/>
            <person name="Aidinis V."/>
            <person name="Allen J.E."/>
            <person name="Ambesi-Impiombato A."/>
            <person name="Apweiler R."/>
            <person name="Aturaliya R.N."/>
            <person name="Bailey T.L."/>
            <person name="Bansal M."/>
            <person name="Baxter L."/>
            <person name="Beisel K.W."/>
            <person name="Bersano T."/>
            <person name="Bono H."/>
            <person name="Chalk A.M."/>
            <person name="Chiu K.P."/>
            <person name="Choudhary V."/>
            <person name="Christoffels A."/>
            <person name="Clutterbuck D.R."/>
            <person name="Crowe M.L."/>
            <person name="Dalla E."/>
            <person name="Dalrymple B.P."/>
            <person name="de Bono B."/>
            <person name="Della Gatta G."/>
            <person name="di Bernardo D."/>
            <person name="Down T."/>
            <person name="Engstrom P."/>
            <person name="Fagiolini M."/>
            <person name="Faulkner G."/>
            <person name="Fletcher C.F."/>
            <person name="Fukushima T."/>
            <person name="Furuno M."/>
            <person name="Futaki S."/>
            <person name="Gariboldi M."/>
            <person name="Georgii-Hemming P."/>
            <person name="Gingeras T.R."/>
            <person name="Gojobori T."/>
            <person name="Green R.E."/>
            <person name="Gustincich S."/>
            <person name="Harbers M."/>
            <person name="Hayashi Y."/>
            <person name="Hensch T.K."/>
            <person name="Hirokawa N."/>
            <person name="Hill D."/>
            <person name="Huminiecki L."/>
            <person name="Iacono M."/>
            <person name="Ikeo K."/>
            <person name="Iwama A."/>
            <person name="Ishikawa T."/>
            <person name="Jakt M."/>
            <person name="Kanapin A."/>
            <person name="Katoh M."/>
            <person name="Kawasawa Y."/>
            <person name="Kelso J."/>
            <person name="Kitamura H."/>
            <person name="Kitano H."/>
            <person name="Kollias G."/>
            <person name="Krishnan S.P."/>
            <person name="Kruger A."/>
            <person name="Kummerfeld S.K."/>
            <person name="Kurochkin I.V."/>
            <person name="Lareau L.F."/>
            <person name="Lazarevic D."/>
            <person name="Lipovich L."/>
            <person name="Liu J."/>
            <person name="Liuni S."/>
            <person name="McWilliam S."/>
            <person name="Madan Babu M."/>
            <person name="Madera M."/>
            <person name="Marchionni L."/>
            <person name="Matsuda H."/>
            <person name="Matsuzawa S."/>
            <person name="Miki H."/>
            <person name="Mignone F."/>
            <person name="Miyake S."/>
            <person name="Morris K."/>
            <person name="Mottagui-Tabar S."/>
            <person name="Mulder N."/>
            <person name="Nakano N."/>
            <person name="Nakauchi H."/>
            <person name="Ng P."/>
            <person name="Nilsson R."/>
            <person name="Nishiguchi S."/>
            <person name="Nishikawa S."/>
            <person name="Nori F."/>
            <person name="Ohara O."/>
            <person name="Okazaki Y."/>
            <person name="Orlando V."/>
            <person name="Pang K.C."/>
            <person name="Pavan W.J."/>
            <person name="Pavesi G."/>
            <person name="Pesole G."/>
            <person name="Petrovsky N."/>
            <person name="Piazza S."/>
            <person name="Reed J."/>
            <person name="Reid J.F."/>
            <person name="Ring B.Z."/>
            <person name="Ringwald M."/>
            <person name="Rost B."/>
            <person name="Ruan Y."/>
            <person name="Salzberg S.L."/>
            <person name="Sandelin A."/>
            <person name="Schneider C."/>
            <person name="Schoenbach C."/>
            <person name="Sekiguchi K."/>
            <person name="Semple C.A."/>
            <person name="Seno S."/>
            <person name="Sessa L."/>
            <person name="Sheng Y."/>
            <person name="Shibata Y."/>
            <person name="Shimada H."/>
            <person name="Shimada K."/>
            <person name="Silva D."/>
            <person name="Sinclair B."/>
            <person name="Sperling S."/>
            <person name="Stupka E."/>
            <person name="Sugiura K."/>
            <person name="Sultana R."/>
            <person name="Takenaka Y."/>
            <person name="Taki K."/>
            <person name="Tammoja K."/>
            <person name="Tan S.L."/>
            <person name="Tang S."/>
            <person name="Taylor M.S."/>
            <person name="Tegner J."/>
            <person name="Teichmann S.A."/>
            <person name="Ueda H.R."/>
            <person name="van Nimwegen E."/>
            <person name="Verardo R."/>
            <person name="Wei C.L."/>
            <person name="Yagi K."/>
            <person name="Yamanishi H."/>
            <person name="Zabarovsky E."/>
            <person name="Zhu S."/>
            <person name="Zimmer A."/>
            <person name="Hide W."/>
            <person name="Bult C."/>
            <person name="Grimmond S.M."/>
            <person name="Teasdale R.D."/>
            <person name="Liu E.T."/>
            <person name="Brusic V."/>
            <person name="Quackenbush J."/>
            <person name="Wahlestedt C."/>
            <person name="Mattick J.S."/>
            <person name="Hume D.A."/>
            <person name="Kai C."/>
            <person name="Sasaki D."/>
            <person name="Tomaru Y."/>
            <person name="Fukuda S."/>
            <person name="Kanamori-Katayama M."/>
            <person name="Suzuki M."/>
            <person name="Aoki J."/>
            <person name="Arakawa T."/>
            <person name="Iida J."/>
            <person name="Imamura K."/>
            <person name="Itoh M."/>
            <person name="Kato T."/>
            <person name="Kawaji H."/>
            <person name="Kawagashira N."/>
            <person name="Kawashima T."/>
            <person name="Kojima M."/>
            <person name="Kondo S."/>
            <person name="Konno H."/>
            <person name="Nakano K."/>
            <person name="Ninomiya N."/>
            <person name="Nishio T."/>
            <person name="Okada M."/>
            <person name="Plessy C."/>
            <person name="Shibata K."/>
            <person name="Shiraki T."/>
            <person name="Suzuki S."/>
            <person name="Tagami M."/>
            <person name="Waki K."/>
            <person name="Watahiki A."/>
            <person name="Okamura-Oho Y."/>
            <person name="Suzuki H."/>
            <person name="Kawai J."/>
            <person name="Hayashizaki Y."/>
        </authorList>
    </citation>
    <scope>NUCLEOTIDE SEQUENCE [LARGE SCALE MRNA]</scope>
    <source>
        <strain>C57BL/6J</strain>
        <strain>NOD</strain>
        <tissue>Cerebellum</tissue>
        <tissue>Spleen</tissue>
    </source>
</reference>
<reference key="2">
    <citation type="journal article" date="2004" name="Genome Res.">
        <title>The status, quality, and expansion of the NIH full-length cDNA project: the Mammalian Gene Collection (MGC).</title>
        <authorList>
            <consortium name="The MGC Project Team"/>
        </authorList>
    </citation>
    <scope>NUCLEOTIDE SEQUENCE [LARGE SCALE MRNA] OF 8-392</scope>
    <source>
        <strain>FVB/N</strain>
        <tissue>Mammary tumor</tissue>
    </source>
</reference>
<reference key="3">
    <citation type="journal article" date="2010" name="Cell">
        <title>A tissue-specific atlas of mouse protein phosphorylation and expression.</title>
        <authorList>
            <person name="Huttlin E.L."/>
            <person name="Jedrychowski M.P."/>
            <person name="Elias J.E."/>
            <person name="Goswami T."/>
            <person name="Rad R."/>
            <person name="Beausoleil S.A."/>
            <person name="Villen J."/>
            <person name="Haas W."/>
            <person name="Sowa M.E."/>
            <person name="Gygi S.P."/>
        </authorList>
    </citation>
    <scope>IDENTIFICATION BY MASS SPECTROMETRY [LARGE SCALE ANALYSIS]</scope>
    <source>
        <tissue>Kidney</tissue>
    </source>
</reference>
<reference key="4">
    <citation type="journal article" date="2013" name="Cell Res.">
        <title>Early estrogen-induced gene 1, a novel RANK signaling component, is essential for osteoclastogenesis.</title>
        <authorList>
            <person name="Choi H.K."/>
            <person name="Kang H.R."/>
            <person name="Jung E."/>
            <person name="Kim T.E."/>
            <person name="Lin J.J."/>
            <person name="Lee S.Y."/>
        </authorList>
    </citation>
    <scope>FUNCTION</scope>
    <scope>IDENTIFICATION IN A COMPLEX WITH TNFRSF11A; PLCG2; GAB2; TEC AND BTK</scope>
    <scope>INTERACTION WITH TNFRSF11A</scope>
    <scope>SUBCELLULAR LOCATION</scope>
    <scope>TISSUE SPECIFICITY</scope>
    <scope>INDUCTION BY NFATC1</scope>
</reference>
<reference key="5">
    <citation type="journal article" date="2020" name="FASEB J.">
        <title>Early estrogen-induced gene 1 facilitates osteoclast formation through the inhibition of interferon regulatory factor 8 expression.</title>
        <authorList>
            <person name="Jeong E."/>
            <person name="Kim J."/>
            <person name="Go M."/>
            <person name="Lee S.Y."/>
        </authorList>
    </citation>
    <scope>FUNCTION</scope>
    <scope>INTERACTION WITH PRDM1</scope>
    <scope>SUBCELLULAR LOCATION</scope>
    <scope>INDUCTION BY TNFSF11 AND TNF</scope>
    <scope>DISRUPTION PHENOTYPE</scope>
</reference>
<comment type="function">
    <text evidence="1 4 5">Key component of TNFSF11/RANKL- and TNF-induced osteoclastogenesis pathways, thereby mediates bone resorption in pathological bone loss conditions (PubMed:23478294, PubMed:32741026). Required for TNFSF11/RANKL-induced osteoclastogenesis via its interaction with TNFRSF11A/RANK, thereby facilitates the downsteam transcription of NFATC1 and activation of PLCG2 (PubMed:23478294). Facilitates recruitment of the transcriptional repressor PRDM1/BLIMP1 to the promoter of the anti-osteoclastogenesis gene IRF8, thereby resulting in transcription of osteoclast differentiation factors (PubMed:32741026). May play a role in estrogen action (By similarity).</text>
</comment>
<comment type="subunit">
    <text evidence="4 5">Part of a complex composed of EEIG1, TNFRSF11A/RANK, PLCG2, GAB2, TEC and BTK; complex formation increases in the presence of TNFSF11/RANKL (PubMed:23478294). Interacts with PRDM1/BLIMP1; following TNFSF11/RANKL stimulation in bone marrow-derived macrophages, the interaction promotes the binding of PRDM1/BLIMP1 to the gene promoter of IRF8 (PubMed:32741026). Interacts (via N-terminus) with TNFRSF11A/RANK (via cytoplasmic domain); when in the presence of TNFSF11/RANKL (PubMed:23478294).</text>
</comment>
<comment type="subcellular location">
    <subcellularLocation>
        <location evidence="5">Nucleus</location>
    </subcellularLocation>
    <subcellularLocation>
        <location evidence="4 5">Cytoplasm</location>
    </subcellularLocation>
    <subcellularLocation>
        <location evidence="4">Membrane raft</location>
    </subcellularLocation>
</comment>
<comment type="tissue specificity">
    <text evidence="4">Expressed during TNFSF11/RANKL-induced differentiation of bone marrow-derived macrophages to osteoclasts.</text>
</comment>
<comment type="induction">
    <text evidence="4 5">Induced by NFATC1 in bone marrow-derived macrophages (PubMed:23478294). Induced by TNFSF11/RANKL and TNF in bone marrow macrophages (PubMed:32741026).</text>
</comment>
<comment type="disruption phenotype">
    <text evidence="5">No effect on bone mass under homeostatic conditions, however reduces osteoclast number, amount of bone destruction, number of osteolytic cavities and abundance of serum Acp5/TRAP levels in a lipopolysaccharide-induced bone destruction model.</text>
</comment>
<comment type="similarity">
    <text evidence="6">Belongs to the EEIG family.</text>
</comment>
<comment type="sequence caution" evidence="6">
    <conflict type="erroneous initiation">
        <sequence resource="EMBL-CDS" id="AAH31157"/>
    </conflict>
</comment>
<sequence length="392" mass="42830">MAFLMKKKKFKFQTTFTLEELTAVPFVNGVLFCKVRLLDGGDFVSLSSREEVQENCVRWRKRFTFVCKMSANPATGLLDPCIFRVSVRKELKGGKAYSKLGFTDLNLAEFAGSGSTVRCCLLEGYDTKNTRQDNSILKVTIGMFLLSGDPCFKTPPSTAKSISIPGQDSSLQLTCKGGGTSSGGSSSTNSLTGSRPPKTRPTILGSGLPEEPDQSLSSPEEVFHSGHSRNSSYASQQSKLSGYSTEHSRSSSLSDLTHRRNTSTSSSASGGLSMAVEGPEGMEREHRPSEKPPRPPEKPPRPPRPLHLSDRSFRRKKDSVESHPTWVDDTRIDADDIVEKIMQSQDFTDGSNTEDSNLRLFVSRDGSTTLSGIQLGNRVSSGVYEPVVIESH</sequence>
<proteinExistence type="evidence at protein level"/>